<protein>
    <recommendedName>
        <fullName evidence="1">Triosephosphate isomerase</fullName>
        <shortName evidence="1">TIM</shortName>
        <shortName evidence="1">TPI</shortName>
        <ecNumber evidence="1">5.3.1.1</ecNumber>
    </recommendedName>
    <alternativeName>
        <fullName evidence="1">Triose-phosphate isomerase</fullName>
    </alternativeName>
</protein>
<reference key="1">
    <citation type="journal article" date="2014" name="Stand. Genomic Sci.">
        <title>Complete genome sequence of Anabaena variabilis ATCC 29413.</title>
        <authorList>
            <person name="Thiel T."/>
            <person name="Pratte B.S."/>
            <person name="Zhong J."/>
            <person name="Goodwin L."/>
            <person name="Copeland A."/>
            <person name="Lucas S."/>
            <person name="Han C."/>
            <person name="Pitluck S."/>
            <person name="Land M.L."/>
            <person name="Kyrpides N.C."/>
            <person name="Woyke T."/>
        </authorList>
    </citation>
    <scope>NUCLEOTIDE SEQUENCE [LARGE SCALE GENOMIC DNA]</scope>
    <source>
        <strain>ATCC 29413 / PCC 7937</strain>
    </source>
</reference>
<keyword id="KW-0963">Cytoplasm</keyword>
<keyword id="KW-0312">Gluconeogenesis</keyword>
<keyword id="KW-0324">Glycolysis</keyword>
<keyword id="KW-0413">Isomerase</keyword>
<gene>
    <name evidence="1" type="primary">tpiA</name>
    <name type="ordered locus">Ava_3290</name>
</gene>
<dbReference type="EC" id="5.3.1.1" evidence="1"/>
<dbReference type="EMBL" id="CP000117">
    <property type="protein sequence ID" value="ABA22898.1"/>
    <property type="molecule type" value="Genomic_DNA"/>
</dbReference>
<dbReference type="SMR" id="Q3M7Y8"/>
<dbReference type="STRING" id="240292.Ava_3290"/>
<dbReference type="KEGG" id="ava:Ava_3290"/>
<dbReference type="eggNOG" id="COG0149">
    <property type="taxonomic scope" value="Bacteria"/>
</dbReference>
<dbReference type="HOGENOM" id="CLU_024251_2_3_3"/>
<dbReference type="UniPathway" id="UPA00109">
    <property type="reaction ID" value="UER00189"/>
</dbReference>
<dbReference type="UniPathway" id="UPA00138"/>
<dbReference type="Proteomes" id="UP000002533">
    <property type="component" value="Chromosome"/>
</dbReference>
<dbReference type="GO" id="GO:0005829">
    <property type="term" value="C:cytosol"/>
    <property type="evidence" value="ECO:0007669"/>
    <property type="project" value="TreeGrafter"/>
</dbReference>
<dbReference type="GO" id="GO:0004807">
    <property type="term" value="F:triose-phosphate isomerase activity"/>
    <property type="evidence" value="ECO:0007669"/>
    <property type="project" value="UniProtKB-UniRule"/>
</dbReference>
<dbReference type="GO" id="GO:0006094">
    <property type="term" value="P:gluconeogenesis"/>
    <property type="evidence" value="ECO:0007669"/>
    <property type="project" value="UniProtKB-UniRule"/>
</dbReference>
<dbReference type="GO" id="GO:0046166">
    <property type="term" value="P:glyceraldehyde-3-phosphate biosynthetic process"/>
    <property type="evidence" value="ECO:0007669"/>
    <property type="project" value="TreeGrafter"/>
</dbReference>
<dbReference type="GO" id="GO:0019563">
    <property type="term" value="P:glycerol catabolic process"/>
    <property type="evidence" value="ECO:0007669"/>
    <property type="project" value="TreeGrafter"/>
</dbReference>
<dbReference type="GO" id="GO:0006096">
    <property type="term" value="P:glycolytic process"/>
    <property type="evidence" value="ECO:0007669"/>
    <property type="project" value="UniProtKB-UniRule"/>
</dbReference>
<dbReference type="CDD" id="cd00311">
    <property type="entry name" value="TIM"/>
    <property type="match status" value="1"/>
</dbReference>
<dbReference type="FunFam" id="3.20.20.70:FF:000016">
    <property type="entry name" value="Triosephosphate isomerase"/>
    <property type="match status" value="1"/>
</dbReference>
<dbReference type="Gene3D" id="3.20.20.70">
    <property type="entry name" value="Aldolase class I"/>
    <property type="match status" value="1"/>
</dbReference>
<dbReference type="HAMAP" id="MF_00147_B">
    <property type="entry name" value="TIM_B"/>
    <property type="match status" value="1"/>
</dbReference>
<dbReference type="InterPro" id="IPR013785">
    <property type="entry name" value="Aldolase_TIM"/>
</dbReference>
<dbReference type="InterPro" id="IPR035990">
    <property type="entry name" value="TIM_sf"/>
</dbReference>
<dbReference type="InterPro" id="IPR022896">
    <property type="entry name" value="TrioseP_Isoase_bac/euk"/>
</dbReference>
<dbReference type="InterPro" id="IPR000652">
    <property type="entry name" value="Triosephosphate_isomerase"/>
</dbReference>
<dbReference type="InterPro" id="IPR020861">
    <property type="entry name" value="Triosephosphate_isomerase_AS"/>
</dbReference>
<dbReference type="NCBIfam" id="TIGR00419">
    <property type="entry name" value="tim"/>
    <property type="match status" value="1"/>
</dbReference>
<dbReference type="PANTHER" id="PTHR21139">
    <property type="entry name" value="TRIOSEPHOSPHATE ISOMERASE"/>
    <property type="match status" value="1"/>
</dbReference>
<dbReference type="PANTHER" id="PTHR21139:SF42">
    <property type="entry name" value="TRIOSEPHOSPHATE ISOMERASE"/>
    <property type="match status" value="1"/>
</dbReference>
<dbReference type="Pfam" id="PF00121">
    <property type="entry name" value="TIM"/>
    <property type="match status" value="1"/>
</dbReference>
<dbReference type="SUPFAM" id="SSF51351">
    <property type="entry name" value="Triosephosphate isomerase (TIM)"/>
    <property type="match status" value="1"/>
</dbReference>
<dbReference type="PROSITE" id="PS00171">
    <property type="entry name" value="TIM_1"/>
    <property type="match status" value="1"/>
</dbReference>
<dbReference type="PROSITE" id="PS51440">
    <property type="entry name" value="TIM_2"/>
    <property type="match status" value="1"/>
</dbReference>
<proteinExistence type="inferred from homology"/>
<accession>Q3M7Y8</accession>
<name>TPIS_TRIV2</name>
<feature type="chain" id="PRO_0000307423" description="Triosephosphate isomerase">
    <location>
        <begin position="1"/>
        <end position="241"/>
    </location>
</feature>
<feature type="active site" description="Electrophile" evidence="1">
    <location>
        <position position="96"/>
    </location>
</feature>
<feature type="active site" description="Proton acceptor" evidence="1">
    <location>
        <position position="165"/>
    </location>
</feature>
<feature type="binding site" evidence="1">
    <location>
        <begin position="9"/>
        <end position="11"/>
    </location>
    <ligand>
        <name>substrate</name>
    </ligand>
</feature>
<feature type="binding site" evidence="1">
    <location>
        <position position="171"/>
    </location>
    <ligand>
        <name>substrate</name>
    </ligand>
</feature>
<feature type="binding site" evidence="1">
    <location>
        <position position="204"/>
    </location>
    <ligand>
        <name>substrate</name>
    </ligand>
</feature>
<feature type="binding site" evidence="1">
    <location>
        <begin position="225"/>
        <end position="226"/>
    </location>
    <ligand>
        <name>substrate</name>
    </ligand>
</feature>
<evidence type="ECO:0000255" key="1">
    <source>
        <dbReference type="HAMAP-Rule" id="MF_00147"/>
    </source>
</evidence>
<sequence>MRKIVIAGNWKMFKTQAESQEFLKEFLPALEETPQEREVLLCVPFTDLAILSQSLHGSLVQLGAQNVHWAENGAYTGEISGPMLTEIGVRYVIVGHSERRQFFGETDETVNLRLQAAQKYGLTPILCVGETKQQRDSGETESLIVSQLDKDLINVDQTNLVIAYEPIWAIGTGDTCETTEANRVIGLIRSQLKNPDVPIQYGGSVKPNNIDEIMAQPEIDGVLVGGASLEAASFARIVNYQ</sequence>
<organism>
    <name type="scientific">Trichormus variabilis (strain ATCC 29413 / PCC 7937)</name>
    <name type="common">Anabaena variabilis</name>
    <dbReference type="NCBI Taxonomy" id="240292"/>
    <lineage>
        <taxon>Bacteria</taxon>
        <taxon>Bacillati</taxon>
        <taxon>Cyanobacteriota</taxon>
        <taxon>Cyanophyceae</taxon>
        <taxon>Nostocales</taxon>
        <taxon>Nostocaceae</taxon>
        <taxon>Trichormus</taxon>
    </lineage>
</organism>
<comment type="function">
    <text evidence="1">Involved in the gluconeogenesis. Catalyzes stereospecifically the conversion of dihydroxyacetone phosphate (DHAP) to D-glyceraldehyde-3-phosphate (G3P).</text>
</comment>
<comment type="catalytic activity">
    <reaction evidence="1">
        <text>D-glyceraldehyde 3-phosphate = dihydroxyacetone phosphate</text>
        <dbReference type="Rhea" id="RHEA:18585"/>
        <dbReference type="ChEBI" id="CHEBI:57642"/>
        <dbReference type="ChEBI" id="CHEBI:59776"/>
        <dbReference type="EC" id="5.3.1.1"/>
    </reaction>
</comment>
<comment type="pathway">
    <text evidence="1">Carbohydrate biosynthesis; gluconeogenesis.</text>
</comment>
<comment type="pathway">
    <text evidence="1">Carbohydrate degradation; glycolysis; D-glyceraldehyde 3-phosphate from glycerone phosphate: step 1/1.</text>
</comment>
<comment type="subunit">
    <text evidence="1">Homodimer.</text>
</comment>
<comment type="subcellular location">
    <subcellularLocation>
        <location evidence="1">Cytoplasm</location>
    </subcellularLocation>
</comment>
<comment type="similarity">
    <text evidence="1">Belongs to the triosephosphate isomerase family.</text>
</comment>